<comment type="catalytic activity">
    <reaction evidence="1">
        <text>(6S)-5,6,7,8-tetrahydrofolate + formate + ATP = (6R)-10-formyltetrahydrofolate + ADP + phosphate</text>
        <dbReference type="Rhea" id="RHEA:20221"/>
        <dbReference type="ChEBI" id="CHEBI:15740"/>
        <dbReference type="ChEBI" id="CHEBI:30616"/>
        <dbReference type="ChEBI" id="CHEBI:43474"/>
        <dbReference type="ChEBI" id="CHEBI:57453"/>
        <dbReference type="ChEBI" id="CHEBI:195366"/>
        <dbReference type="ChEBI" id="CHEBI:456216"/>
        <dbReference type="EC" id="6.3.4.3"/>
    </reaction>
</comment>
<comment type="pathway">
    <text evidence="1">One-carbon metabolism; tetrahydrofolate interconversion.</text>
</comment>
<comment type="similarity">
    <text evidence="1">Belongs to the formate--tetrahydrofolate ligase family.</text>
</comment>
<protein>
    <recommendedName>
        <fullName evidence="1">Formate--tetrahydrofolate ligase</fullName>
        <ecNumber evidence="1">6.3.4.3</ecNumber>
    </recommendedName>
    <alternativeName>
        <fullName evidence="1">Formyltetrahydrofolate synthetase</fullName>
        <shortName evidence="1">FHS</shortName>
        <shortName evidence="1">FTHFS</shortName>
    </alternativeName>
</protein>
<sequence>MTNSSATSNPQPSDVEIAQAHTLEPITTIAERAGIPEAALIPYGRTKAKIDVPALRAEREGVNKKGKLVLVTAMSPTPAGEGKSTVLIGLADAVRTAGRQTMVAIREPSQGPVMGIKGGAAGGGYAQIVPMEDINLHFTGDMHAITAATNTLAAMVDNHVQHGNALGIDPRRVTWRRCLDVNDRSLRHVVTGLGGPGQGTPREGGFDITAASEIMAILCLATDLEDLKKRIGRIVVGQTYDRRPVTAGDLKCAGAITALLRDAINPNLVQTLGGTPALVHGGPFANIAHGCNSLIATTTALDLSEVVLTEAGFGSDLGAEKFFDIKSRAGDLDVAATVVVATIRSLKHNGDSVLKAGLANLERHVSNIRKFGVEPVVALNLFSSDTAAERSMVADWGEQFGVRVVECSVWAEGGAGAADLATAVLEVVDGVSDEDASSSSHQIYQPVDGVEATLHTLATEIYGAADVQFGPQALKDLAFLKDNGWDKLPVCVSKTQYSFSDDPSALGAPSGHTLHVRELVPRIGAGFVVALTGDVMTLPGLPKKPAAERIDVNAQGVISGLF</sequence>
<name>FTHS_CORJK</name>
<accession>Q4JVW2</accession>
<gene>
    <name evidence="1" type="primary">fhs</name>
    <name type="ordered locus">jk0881</name>
</gene>
<dbReference type="EC" id="6.3.4.3" evidence="1"/>
<dbReference type="EMBL" id="CR931997">
    <property type="protein sequence ID" value="CAI37045.1"/>
    <property type="molecule type" value="Genomic_DNA"/>
</dbReference>
<dbReference type="RefSeq" id="WP_011273471.1">
    <property type="nucleotide sequence ID" value="NC_007164.1"/>
</dbReference>
<dbReference type="SMR" id="Q4JVW2"/>
<dbReference type="STRING" id="306537.jk0881"/>
<dbReference type="KEGG" id="cjk:jk0881"/>
<dbReference type="PATRIC" id="fig|306537.10.peg.893"/>
<dbReference type="eggNOG" id="COG2759">
    <property type="taxonomic scope" value="Bacteria"/>
</dbReference>
<dbReference type="HOGENOM" id="CLU_003601_3_3_11"/>
<dbReference type="OrthoDB" id="9761733at2"/>
<dbReference type="UniPathway" id="UPA00193"/>
<dbReference type="Proteomes" id="UP000000545">
    <property type="component" value="Chromosome"/>
</dbReference>
<dbReference type="GO" id="GO:0005524">
    <property type="term" value="F:ATP binding"/>
    <property type="evidence" value="ECO:0007669"/>
    <property type="project" value="UniProtKB-UniRule"/>
</dbReference>
<dbReference type="GO" id="GO:0004329">
    <property type="term" value="F:formate-tetrahydrofolate ligase activity"/>
    <property type="evidence" value="ECO:0007669"/>
    <property type="project" value="UniProtKB-UniRule"/>
</dbReference>
<dbReference type="GO" id="GO:0035999">
    <property type="term" value="P:tetrahydrofolate interconversion"/>
    <property type="evidence" value="ECO:0007669"/>
    <property type="project" value="UniProtKB-UniRule"/>
</dbReference>
<dbReference type="CDD" id="cd00477">
    <property type="entry name" value="FTHFS"/>
    <property type="match status" value="1"/>
</dbReference>
<dbReference type="FunFam" id="3.30.1510.10:FF:000001">
    <property type="entry name" value="Formate--tetrahydrofolate ligase"/>
    <property type="match status" value="1"/>
</dbReference>
<dbReference type="Gene3D" id="3.30.1510.10">
    <property type="entry name" value="Domain 2, N(10)-formyltetrahydrofolate synthetase"/>
    <property type="match status" value="1"/>
</dbReference>
<dbReference type="Gene3D" id="3.10.410.10">
    <property type="entry name" value="Formyltetrahydrofolate synthetase, domain 3"/>
    <property type="match status" value="1"/>
</dbReference>
<dbReference type="Gene3D" id="3.40.50.300">
    <property type="entry name" value="P-loop containing nucleotide triphosphate hydrolases"/>
    <property type="match status" value="1"/>
</dbReference>
<dbReference type="HAMAP" id="MF_01543">
    <property type="entry name" value="FTHFS"/>
    <property type="match status" value="1"/>
</dbReference>
<dbReference type="InterPro" id="IPR000559">
    <property type="entry name" value="Formate_THF_ligase"/>
</dbReference>
<dbReference type="InterPro" id="IPR020628">
    <property type="entry name" value="Formate_THF_ligase_CS"/>
</dbReference>
<dbReference type="InterPro" id="IPR027417">
    <property type="entry name" value="P-loop_NTPase"/>
</dbReference>
<dbReference type="NCBIfam" id="NF010030">
    <property type="entry name" value="PRK13505.1"/>
    <property type="match status" value="1"/>
</dbReference>
<dbReference type="Pfam" id="PF01268">
    <property type="entry name" value="FTHFS"/>
    <property type="match status" value="1"/>
</dbReference>
<dbReference type="SUPFAM" id="SSF52540">
    <property type="entry name" value="P-loop containing nucleoside triphosphate hydrolases"/>
    <property type="match status" value="1"/>
</dbReference>
<dbReference type="PROSITE" id="PS00721">
    <property type="entry name" value="FTHFS_1"/>
    <property type="match status" value="1"/>
</dbReference>
<dbReference type="PROSITE" id="PS00722">
    <property type="entry name" value="FTHFS_2"/>
    <property type="match status" value="1"/>
</dbReference>
<organism>
    <name type="scientific">Corynebacterium jeikeium (strain K411)</name>
    <dbReference type="NCBI Taxonomy" id="306537"/>
    <lineage>
        <taxon>Bacteria</taxon>
        <taxon>Bacillati</taxon>
        <taxon>Actinomycetota</taxon>
        <taxon>Actinomycetes</taxon>
        <taxon>Mycobacteriales</taxon>
        <taxon>Corynebacteriaceae</taxon>
        <taxon>Corynebacterium</taxon>
    </lineage>
</organism>
<keyword id="KW-0067">ATP-binding</keyword>
<keyword id="KW-0436">Ligase</keyword>
<keyword id="KW-0547">Nucleotide-binding</keyword>
<keyword id="KW-0554">One-carbon metabolism</keyword>
<keyword id="KW-1185">Reference proteome</keyword>
<proteinExistence type="inferred from homology"/>
<evidence type="ECO:0000255" key="1">
    <source>
        <dbReference type="HAMAP-Rule" id="MF_01543"/>
    </source>
</evidence>
<reference key="1">
    <citation type="journal article" date="2005" name="J. Bacteriol.">
        <title>Complete genome sequence and analysis of the multiresistant nosocomial pathogen Corynebacterium jeikeium K411, a lipid-requiring bacterium of the human skin flora.</title>
        <authorList>
            <person name="Tauch A."/>
            <person name="Kaiser O."/>
            <person name="Hain T."/>
            <person name="Goesmann A."/>
            <person name="Weisshaar B."/>
            <person name="Albersmeier A."/>
            <person name="Bekel T."/>
            <person name="Bischoff N."/>
            <person name="Brune I."/>
            <person name="Chakraborty T."/>
            <person name="Kalinowski J."/>
            <person name="Meyer F."/>
            <person name="Rupp O."/>
            <person name="Schneiker S."/>
            <person name="Viehoever P."/>
            <person name="Puehler A."/>
        </authorList>
    </citation>
    <scope>NUCLEOTIDE SEQUENCE [LARGE SCALE GENOMIC DNA]</scope>
    <source>
        <strain>K411</strain>
    </source>
</reference>
<feature type="chain" id="PRO_0000199343" description="Formate--tetrahydrofolate ligase">
    <location>
        <begin position="1"/>
        <end position="562"/>
    </location>
</feature>
<feature type="binding site" evidence="1">
    <location>
        <begin position="77"/>
        <end position="84"/>
    </location>
    <ligand>
        <name>ATP</name>
        <dbReference type="ChEBI" id="CHEBI:30616"/>
    </ligand>
</feature>